<evidence type="ECO:0000269" key="1">
    <source>
    </source>
</evidence>
<evidence type="ECO:0000269" key="2">
    <source>
    </source>
</evidence>
<evidence type="ECO:0000305" key="3"/>
<gene>
    <name type="ordered locus">Ba71V-96</name>
    <name type="ORF">CP312R</name>
</gene>
<dbReference type="EMBL" id="U18466">
    <property type="protein sequence ID" value="AAA65325.1"/>
    <property type="molecule type" value="Genomic_DNA"/>
</dbReference>
<dbReference type="RefSeq" id="NP_042789.1">
    <property type="nucleotide sequence ID" value="NC_001659.2"/>
</dbReference>
<dbReference type="SMR" id="Q65180"/>
<dbReference type="GeneID" id="22220325"/>
<dbReference type="KEGG" id="vg:22220325"/>
<dbReference type="Proteomes" id="UP000000624">
    <property type="component" value="Segment"/>
</dbReference>
<dbReference type="GO" id="GO:0044423">
    <property type="term" value="C:virion component"/>
    <property type="evidence" value="ECO:0007669"/>
    <property type="project" value="UniProtKB-KW"/>
</dbReference>
<comment type="subcellular location">
    <subcellularLocation>
        <location evidence="1">Virion</location>
    </subcellularLocation>
</comment>
<comment type="alternative products">
    <event type="alternative initiation"/>
    <isoform>
        <id>Q65180-1</id>
        <name>1</name>
        <sequence type="displayed"/>
    </isoform>
    <isoform>
        <id>Q65180-2</id>
        <name>2</name>
        <sequence type="described" ref="VSP_061334"/>
    </isoform>
</comment>
<comment type="induction">
    <text evidence="2">Expressed in the early phase of the viral replicative cycle.</text>
</comment>
<comment type="similarity">
    <text evidence="3">Belongs to the asfivirus CP312R family.</text>
</comment>
<feature type="chain" id="PRO_0000373634" description="Uncharacterized protein CP312R">
    <location>
        <begin position="1"/>
        <end position="312"/>
    </location>
</feature>
<feature type="splice variant" id="VSP_061334" description="In isoform 2." evidence="2">
    <location>
        <begin position="1"/>
        <end position="5"/>
    </location>
</feature>
<organism>
    <name type="scientific">African swine fever virus (strain Badajoz 1971 Vero-adapted)</name>
    <name type="common">Ba71V</name>
    <name type="synonym">ASFV</name>
    <dbReference type="NCBI Taxonomy" id="10498"/>
    <lineage>
        <taxon>Viruses</taxon>
        <taxon>Varidnaviria</taxon>
        <taxon>Bamfordvirae</taxon>
        <taxon>Nucleocytoviricota</taxon>
        <taxon>Pokkesviricetes</taxon>
        <taxon>Asfuvirales</taxon>
        <taxon>Asfarviridae</taxon>
        <taxon>Asfivirus</taxon>
        <taxon>African swine fever virus</taxon>
    </lineage>
</organism>
<reference key="1">
    <citation type="journal article" date="1995" name="Virology">
        <title>Analysis of the complete nucleotide sequence of African swine fever virus.</title>
        <authorList>
            <person name="Yanez R.J."/>
            <person name="Rodriguez J.M."/>
            <person name="Nogal M.L."/>
            <person name="Yuste L."/>
            <person name="Enriquez C."/>
            <person name="Rodriguez J.F."/>
            <person name="Vinuela E."/>
        </authorList>
    </citation>
    <scope>NUCLEOTIDE SEQUENCE [LARGE SCALE GENOMIC DNA]</scope>
</reference>
<reference key="2">
    <citation type="journal article" date="2018" name="J. Virol.">
        <title>A Proteomic Atlas of the African Swine Fever Virus Particle.</title>
        <authorList>
            <person name="Alejo A."/>
            <person name="Matamoros T."/>
            <person name="Guerra M."/>
            <person name="Andres G."/>
        </authorList>
    </citation>
    <scope>SUBCELLULAR LOCATION</scope>
</reference>
<reference key="3">
    <citation type="journal article" date="2020" name="J. Virol.">
        <title>The African Swine Fever Virus Transcriptome.</title>
        <authorList>
            <person name="Cackett G."/>
            <person name="Matelska D."/>
            <person name="Sykora M."/>
            <person name="Portugal R."/>
            <person name="Malecki M."/>
            <person name="Baehler J."/>
            <person name="Dixon L."/>
            <person name="Werner F."/>
        </authorList>
    </citation>
    <scope>INDUCTION</scope>
    <scope>ALTERNATIVE INITIATION</scope>
</reference>
<accession>Q65180</accession>
<name>VF312_ASFB7</name>
<protein>
    <recommendedName>
        <fullName>Uncharacterized protein CP312R</fullName>
        <shortName>pCP312R</shortName>
    </recommendedName>
</protein>
<organismHost>
    <name type="scientific">Ornithodoros</name>
    <name type="common">relapsing fever ticks</name>
    <dbReference type="NCBI Taxonomy" id="6937"/>
</organismHost>
<organismHost>
    <name type="scientific">Sus scrofa</name>
    <name type="common">Pig</name>
    <dbReference type="NCBI Taxonomy" id="9823"/>
</organismHost>
<proteinExistence type="evidence at transcript level"/>
<keyword id="KW-0024">Alternative initiation</keyword>
<keyword id="KW-0244">Early protein</keyword>
<keyword id="KW-1185">Reference proteome</keyword>
<keyword id="KW-0946">Virion</keyword>
<sequence length="312" mass="35086">MLLVKMTTHIFHADDLLQALQQAKAEKNFSSVFSLDWDKLRTAKRNTTVKYVTVNVIVKGKKAPLMFNFQNEKHVGTIPPSTDEEVIRMNAENPKFLVKKRDRDPCLQFNKYKISPPLEDDGLTVKKNEQGEEIYPGDEEKSKLFQIIELLEEAFEDAVQKGPEAMKTKHVIKLIQRKISNSAVKNADKPLPNPIARIRIKINPATSILTPILLDKNKPITLQNGKTSFEELKDEDGVKANPDNIHKLIESHSMHDGIINARSICISNMGISFPLCLEMGVVKVFEKNNGIDVNSIYGSDDISTLVNQIAIA</sequence>